<organism>
    <name type="scientific">Thermosynechococcus vestitus (strain NIES-2133 / IAM M-273 / BP-1)</name>
    <dbReference type="NCBI Taxonomy" id="197221"/>
    <lineage>
        <taxon>Bacteria</taxon>
        <taxon>Bacillati</taxon>
        <taxon>Cyanobacteriota</taxon>
        <taxon>Cyanophyceae</taxon>
        <taxon>Acaryochloridales</taxon>
        <taxon>Thermosynechococcaceae</taxon>
        <taxon>Thermosynechococcus</taxon>
    </lineage>
</organism>
<accession>Q8DG73</accession>
<keyword id="KW-0067">ATP-binding</keyword>
<keyword id="KW-0963">Cytoplasm</keyword>
<keyword id="KW-0418">Kinase</keyword>
<keyword id="KW-0436">Ligase</keyword>
<keyword id="KW-0511">Multifunctional enzyme</keyword>
<keyword id="KW-0547">Nucleotide-binding</keyword>
<keyword id="KW-0566">Pantothenate biosynthesis</keyword>
<keyword id="KW-1185">Reference proteome</keyword>
<keyword id="KW-0808">Transferase</keyword>
<dbReference type="EC" id="6.3.2.1" evidence="1"/>
<dbReference type="EC" id="2.7.4.25" evidence="1"/>
<dbReference type="EMBL" id="BA000039">
    <property type="protein sequence ID" value="BAC10002.1"/>
    <property type="molecule type" value="Genomic_DNA"/>
</dbReference>
<dbReference type="RefSeq" id="NP_683240.1">
    <property type="nucleotide sequence ID" value="NC_004113.1"/>
</dbReference>
<dbReference type="RefSeq" id="WP_011058282.1">
    <property type="nucleotide sequence ID" value="NC_004113.1"/>
</dbReference>
<dbReference type="SMR" id="Q8DG73"/>
<dbReference type="STRING" id="197221.gene:10749071"/>
<dbReference type="EnsemblBacteria" id="BAC10002">
    <property type="protein sequence ID" value="BAC10002"/>
    <property type="gene ID" value="BAC10002"/>
</dbReference>
<dbReference type="KEGG" id="tel:tll2450"/>
<dbReference type="PATRIC" id="fig|197221.4.peg.2574"/>
<dbReference type="eggNOG" id="COG0283">
    <property type="taxonomic scope" value="Bacteria"/>
</dbReference>
<dbReference type="eggNOG" id="COG0414">
    <property type="taxonomic scope" value="Bacteria"/>
</dbReference>
<dbReference type="UniPathway" id="UPA00028">
    <property type="reaction ID" value="UER00005"/>
</dbReference>
<dbReference type="Proteomes" id="UP000000440">
    <property type="component" value="Chromosome"/>
</dbReference>
<dbReference type="GO" id="GO:0005829">
    <property type="term" value="C:cytosol"/>
    <property type="evidence" value="ECO:0007669"/>
    <property type="project" value="TreeGrafter"/>
</dbReference>
<dbReference type="GO" id="GO:0005524">
    <property type="term" value="F:ATP binding"/>
    <property type="evidence" value="ECO:0007669"/>
    <property type="project" value="UniProtKB-UniRule"/>
</dbReference>
<dbReference type="GO" id="GO:0036430">
    <property type="term" value="F:CMP kinase activity"/>
    <property type="evidence" value="ECO:0007669"/>
    <property type="project" value="RHEA"/>
</dbReference>
<dbReference type="GO" id="GO:0036431">
    <property type="term" value="F:dCMP kinase activity"/>
    <property type="evidence" value="ECO:0007669"/>
    <property type="project" value="RHEA"/>
</dbReference>
<dbReference type="GO" id="GO:0004592">
    <property type="term" value="F:pantoate-beta-alanine ligase activity"/>
    <property type="evidence" value="ECO:0007669"/>
    <property type="project" value="UniProtKB-UniRule"/>
</dbReference>
<dbReference type="GO" id="GO:0015949">
    <property type="term" value="P:nucleobase-containing small molecule interconversion"/>
    <property type="evidence" value="ECO:0007669"/>
    <property type="project" value="TreeGrafter"/>
</dbReference>
<dbReference type="GO" id="GO:0015940">
    <property type="term" value="P:pantothenate biosynthetic process"/>
    <property type="evidence" value="ECO:0007669"/>
    <property type="project" value="UniProtKB-UniRule"/>
</dbReference>
<dbReference type="GO" id="GO:0006220">
    <property type="term" value="P:pyrimidine nucleotide metabolic process"/>
    <property type="evidence" value="ECO:0007669"/>
    <property type="project" value="UniProtKB-UniRule"/>
</dbReference>
<dbReference type="CDD" id="cd02020">
    <property type="entry name" value="CMPK"/>
    <property type="match status" value="1"/>
</dbReference>
<dbReference type="CDD" id="cd00560">
    <property type="entry name" value="PanC"/>
    <property type="match status" value="1"/>
</dbReference>
<dbReference type="FunFam" id="3.40.50.620:FF:000114">
    <property type="entry name" value="Pantothenate synthetase"/>
    <property type="match status" value="1"/>
</dbReference>
<dbReference type="Gene3D" id="3.40.50.620">
    <property type="entry name" value="HUPs"/>
    <property type="match status" value="1"/>
</dbReference>
<dbReference type="Gene3D" id="3.40.50.300">
    <property type="entry name" value="P-loop containing nucleotide triphosphate hydrolases"/>
    <property type="match status" value="1"/>
</dbReference>
<dbReference type="Gene3D" id="3.30.1300.10">
    <property type="entry name" value="Pantoate-beta-alanine ligase, C-terminal domain"/>
    <property type="match status" value="1"/>
</dbReference>
<dbReference type="HAMAP" id="MF_00238">
    <property type="entry name" value="Cytidyl_kinase_type1"/>
    <property type="match status" value="1"/>
</dbReference>
<dbReference type="HAMAP" id="MF_00158">
    <property type="entry name" value="PanC"/>
    <property type="match status" value="1"/>
</dbReference>
<dbReference type="HAMAP" id="MF_01349">
    <property type="entry name" value="PanCY"/>
    <property type="match status" value="1"/>
</dbReference>
<dbReference type="InterPro" id="IPR004821">
    <property type="entry name" value="Cyt_trans-like"/>
</dbReference>
<dbReference type="InterPro" id="IPR003136">
    <property type="entry name" value="Cytidylate_kin"/>
</dbReference>
<dbReference type="InterPro" id="IPR011994">
    <property type="entry name" value="Cytidylate_kinase_dom"/>
</dbReference>
<dbReference type="InterPro" id="IPR027417">
    <property type="entry name" value="P-loop_NTPase"/>
</dbReference>
<dbReference type="InterPro" id="IPR003721">
    <property type="entry name" value="Pantoate_ligase"/>
</dbReference>
<dbReference type="InterPro" id="IPR024894">
    <property type="entry name" value="Pantoate_ligase/cytidylate_kin"/>
</dbReference>
<dbReference type="InterPro" id="IPR042176">
    <property type="entry name" value="Pantoate_ligase_C"/>
</dbReference>
<dbReference type="InterPro" id="IPR014729">
    <property type="entry name" value="Rossmann-like_a/b/a_fold"/>
</dbReference>
<dbReference type="NCBIfam" id="TIGR00017">
    <property type="entry name" value="cmk"/>
    <property type="match status" value="1"/>
</dbReference>
<dbReference type="NCBIfam" id="TIGR00125">
    <property type="entry name" value="cyt_tran_rel"/>
    <property type="match status" value="1"/>
</dbReference>
<dbReference type="NCBIfam" id="TIGR00018">
    <property type="entry name" value="panC"/>
    <property type="match status" value="1"/>
</dbReference>
<dbReference type="NCBIfam" id="NF010004">
    <property type="entry name" value="PRK13477.1"/>
    <property type="match status" value="1"/>
</dbReference>
<dbReference type="PANTHER" id="PTHR21299:SF2">
    <property type="entry name" value="CYTIDYLATE KINASE"/>
    <property type="match status" value="1"/>
</dbReference>
<dbReference type="PANTHER" id="PTHR21299">
    <property type="entry name" value="CYTIDYLATE KINASE/PANTOATE-BETA-ALANINE LIGASE"/>
    <property type="match status" value="1"/>
</dbReference>
<dbReference type="Pfam" id="PF02224">
    <property type="entry name" value="Cytidylate_kin"/>
    <property type="match status" value="1"/>
</dbReference>
<dbReference type="Pfam" id="PF02569">
    <property type="entry name" value="Pantoate_ligase"/>
    <property type="match status" value="1"/>
</dbReference>
<dbReference type="SUPFAM" id="SSF52374">
    <property type="entry name" value="Nucleotidylyl transferase"/>
    <property type="match status" value="1"/>
</dbReference>
<dbReference type="SUPFAM" id="SSF52540">
    <property type="entry name" value="P-loop containing nucleoside triphosphate hydrolases"/>
    <property type="match status" value="1"/>
</dbReference>
<comment type="function">
    <text evidence="1">Catalyzes the condensation of pantoate with beta-alanine in an ATP-dependent reaction via a pantoyl-adenylate intermediate.</text>
</comment>
<comment type="function">
    <text evidence="1">Catalyzes the transfer of a phosphate group from ATP to either CMP or dCMP to form CDP or dCDP and ADP, respectively.</text>
</comment>
<comment type="catalytic activity">
    <reaction evidence="1">
        <text>(R)-pantoate + beta-alanine + ATP = (R)-pantothenate + AMP + diphosphate + H(+)</text>
        <dbReference type="Rhea" id="RHEA:10912"/>
        <dbReference type="ChEBI" id="CHEBI:15378"/>
        <dbReference type="ChEBI" id="CHEBI:15980"/>
        <dbReference type="ChEBI" id="CHEBI:29032"/>
        <dbReference type="ChEBI" id="CHEBI:30616"/>
        <dbReference type="ChEBI" id="CHEBI:33019"/>
        <dbReference type="ChEBI" id="CHEBI:57966"/>
        <dbReference type="ChEBI" id="CHEBI:456215"/>
        <dbReference type="EC" id="6.3.2.1"/>
    </reaction>
</comment>
<comment type="catalytic activity">
    <reaction evidence="1">
        <text>CMP + ATP = CDP + ADP</text>
        <dbReference type="Rhea" id="RHEA:11600"/>
        <dbReference type="ChEBI" id="CHEBI:30616"/>
        <dbReference type="ChEBI" id="CHEBI:58069"/>
        <dbReference type="ChEBI" id="CHEBI:60377"/>
        <dbReference type="ChEBI" id="CHEBI:456216"/>
        <dbReference type="EC" id="2.7.4.25"/>
    </reaction>
</comment>
<comment type="catalytic activity">
    <reaction evidence="1">
        <text>dCMP + ATP = dCDP + ADP</text>
        <dbReference type="Rhea" id="RHEA:25094"/>
        <dbReference type="ChEBI" id="CHEBI:30616"/>
        <dbReference type="ChEBI" id="CHEBI:57566"/>
        <dbReference type="ChEBI" id="CHEBI:58593"/>
        <dbReference type="ChEBI" id="CHEBI:456216"/>
        <dbReference type="EC" id="2.7.4.25"/>
    </reaction>
</comment>
<comment type="pathway">
    <text evidence="1">Cofactor biosynthesis; (R)-pantothenate biosynthesis; (R)-pantothenate from (R)-pantoate and beta-alanine: step 1/1.</text>
</comment>
<comment type="subcellular location">
    <subcellularLocation>
        <location evidence="1">Cytoplasm</location>
    </subcellularLocation>
</comment>
<comment type="similarity">
    <text evidence="1">In the N-terminal section; belongs to the pantothenate synthetase family.</text>
</comment>
<comment type="similarity">
    <text evidence="1">In the C-terminal section; belongs to the cytidylate kinase family. Type 1 subfamily.</text>
</comment>
<feature type="chain" id="PRO_0000239794" description="Bifunctional pantoate ligase/cytidylate kinase">
    <location>
        <begin position="1"/>
        <end position="513"/>
    </location>
</feature>
<feature type="region of interest" description="Pantoate--beta-alanine ligase" evidence="1">
    <location>
        <begin position="1"/>
        <end position="282"/>
    </location>
</feature>
<feature type="region of interest" description="Cytidylate kinase" evidence="1">
    <location>
        <begin position="283"/>
        <end position="513"/>
    </location>
</feature>
<feature type="active site" description="Proton donor" evidence="1">
    <location>
        <position position="39"/>
    </location>
</feature>
<feature type="binding site" evidence="1">
    <location>
        <begin position="32"/>
        <end position="39"/>
    </location>
    <ligand>
        <name>ATP</name>
        <dbReference type="ChEBI" id="CHEBI:30616"/>
    </ligand>
</feature>
<feature type="binding site" evidence="1">
    <location>
        <position position="63"/>
    </location>
    <ligand>
        <name>(R)-pantoate</name>
        <dbReference type="ChEBI" id="CHEBI:15980"/>
    </ligand>
</feature>
<feature type="binding site" evidence="1">
    <location>
        <position position="63"/>
    </location>
    <ligand>
        <name>beta-alanine</name>
        <dbReference type="ChEBI" id="CHEBI:57966"/>
    </ligand>
</feature>
<feature type="binding site" evidence="1">
    <location>
        <begin position="152"/>
        <end position="155"/>
    </location>
    <ligand>
        <name>ATP</name>
        <dbReference type="ChEBI" id="CHEBI:30616"/>
    </ligand>
</feature>
<feature type="binding site" evidence="1">
    <location>
        <position position="158"/>
    </location>
    <ligand>
        <name>(R)-pantoate</name>
        <dbReference type="ChEBI" id="CHEBI:15980"/>
    </ligand>
</feature>
<feature type="binding site" evidence="1">
    <location>
        <position position="181"/>
    </location>
    <ligand>
        <name>ATP</name>
        <dbReference type="ChEBI" id="CHEBI:30616"/>
    </ligand>
</feature>
<feature type="binding site" evidence="1">
    <location>
        <begin position="189"/>
        <end position="192"/>
    </location>
    <ligand>
        <name>ATP</name>
        <dbReference type="ChEBI" id="CHEBI:30616"/>
    </ligand>
</feature>
<protein>
    <recommendedName>
        <fullName evidence="1">Bifunctional pantoate ligase/cytidylate kinase</fullName>
    </recommendedName>
    <domain>
        <recommendedName>
            <fullName evidence="1">Pantothenate synthetase</fullName>
            <shortName evidence="1">PS</shortName>
            <ecNumber evidence="1">6.3.2.1</ecNumber>
        </recommendedName>
        <alternativeName>
            <fullName evidence="1">Pantoate--beta-alanine ligase</fullName>
        </alternativeName>
        <alternativeName>
            <fullName evidence="1">Pantoate-activating enzyme</fullName>
        </alternativeName>
    </domain>
    <domain>
        <recommendedName>
            <fullName evidence="1">Cytidylate kinase</fullName>
            <shortName evidence="1">CK</shortName>
            <ecNumber evidence="1">2.7.4.25</ecNumber>
        </recommendedName>
        <alternativeName>
            <fullName evidence="1">Cytidine monophosphate kinase</fullName>
            <shortName evidence="1">CMP kinase</shortName>
        </alternativeName>
    </domain>
</protein>
<name>PANCY_THEVB</name>
<gene>
    <name evidence="1" type="primary">panC/cmk</name>
    <name type="ordered locus">tll2450</name>
</gene>
<evidence type="ECO:0000255" key="1">
    <source>
        <dbReference type="HAMAP-Rule" id="MF_01349"/>
    </source>
</evidence>
<proteinExistence type="inferred from homology"/>
<sequence>MGTFHRLTTTAGLQTALGTFSPATTVGFVPTMGALHGGHAALIRRARQECDVVVVSIFVNPLQFGPQEDLERYPRALEADTALCQQLGVDLLFVPSVAELYPTGMKHLTVVEPPRELTEHLCGRSRPGHFRGVATIVLKLLHLVQPDRAYFGQKDAQQLAIIRRCVADLNLDVEIIGCPIVRDADGLALSSRNQYLSAEERATALALSQSLEVAQAAFRQGCWDASLLLAQVQDHLRQFPQLRLDYAELVHPQTLVPLERIETVGLLAIAGWVGQTRLIDNCLLDRRRPILAVDGPAGAGKSTVTRLAAQALGLRYLDTGAMYRAVTWWCLENNLDLHDEPAIVEAIAHCRLHLESPDPHQPTRVWINDREVSQAIRSLEVTQRVSQIAALRGVRRLMVQQQRAIGAHGGIAAEGRDIGTHVFPEAGLKIFLTASPEERAQRRWQELQQQGHCDLSYEELLAQITARDTADQQRPYAPFRKAADAIEVCTDNLGIDEVVSKIVHLYRSRFPQP</sequence>
<reference key="1">
    <citation type="journal article" date="2002" name="DNA Res.">
        <title>Complete genome structure of the thermophilic cyanobacterium Thermosynechococcus elongatus BP-1.</title>
        <authorList>
            <person name="Nakamura Y."/>
            <person name="Kaneko T."/>
            <person name="Sato S."/>
            <person name="Ikeuchi M."/>
            <person name="Katoh H."/>
            <person name="Sasamoto S."/>
            <person name="Watanabe A."/>
            <person name="Iriguchi M."/>
            <person name="Kawashima K."/>
            <person name="Kimura T."/>
            <person name="Kishida Y."/>
            <person name="Kiyokawa C."/>
            <person name="Kohara M."/>
            <person name="Matsumoto M."/>
            <person name="Matsuno A."/>
            <person name="Nakazaki N."/>
            <person name="Shimpo S."/>
            <person name="Sugimoto M."/>
            <person name="Takeuchi C."/>
            <person name="Yamada M."/>
            <person name="Tabata S."/>
        </authorList>
    </citation>
    <scope>NUCLEOTIDE SEQUENCE [LARGE SCALE GENOMIC DNA]</scope>
    <source>
        <strain>NIES-2133 / IAM M-273 / BP-1</strain>
    </source>
</reference>